<protein>
    <recommendedName>
        <fullName>Ubiquitin-conjugating enzyme E2 2</fullName>
        <ecNumber>2.3.2.23</ecNumber>
    </recommendedName>
    <alternativeName>
        <fullName>E2 ubiquitin-conjugating enzyme 2</fullName>
    </alternativeName>
    <alternativeName>
        <fullName>Ubiquitin carrier protein UBC2</fullName>
    </alternativeName>
    <alternativeName>
        <fullName>Ubiquitin-protein ligase UBC2</fullName>
    </alternativeName>
</protein>
<comment type="function">
    <text evidence="2">Catalyzes the covalent attachment of ubiquitin to other proteins. Plays a role in transcription regulation by catalyzing the monoubiquitination of histone H2B to form H2BK123ub1. H2BK123ub1 gives a specific tag for epigenetic transcriptional activation and is also a prerequisite for H3K4me and H3K79me formation. Also involved in postreplication repair of UV-damaged DNA, in N-end rule-dependent protein degradation and in sporulation.</text>
</comment>
<comment type="catalytic activity">
    <reaction evidence="2 3">
        <text>S-ubiquitinyl-[E1 ubiquitin-activating enzyme]-L-cysteine + [E2 ubiquitin-conjugating enzyme]-L-cysteine = [E1 ubiquitin-activating enzyme]-L-cysteine + S-ubiquitinyl-[E2 ubiquitin-conjugating enzyme]-L-cysteine.</text>
        <dbReference type="EC" id="2.3.2.23"/>
    </reaction>
</comment>
<comment type="pathway">
    <text evidence="2">Protein modification; protein ubiquitination.</text>
</comment>
<comment type="subcellular location">
    <subcellularLocation>
        <location evidence="1">Cytoplasm</location>
    </subcellularLocation>
    <subcellularLocation>
        <location evidence="1">Nucleus</location>
    </subcellularLocation>
</comment>
<comment type="similarity">
    <text evidence="2">Belongs to the ubiquitin-conjugating enzyme family.</text>
</comment>
<keyword id="KW-0067">ATP-binding</keyword>
<keyword id="KW-0156">Chromatin regulator</keyword>
<keyword id="KW-0963">Cytoplasm</keyword>
<keyword id="KW-0227">DNA damage</keyword>
<keyword id="KW-0234">DNA repair</keyword>
<keyword id="KW-0547">Nucleotide-binding</keyword>
<keyword id="KW-0539">Nucleus</keyword>
<keyword id="KW-1185">Reference proteome</keyword>
<keyword id="KW-0749">Sporulation</keyword>
<keyword id="KW-0804">Transcription</keyword>
<keyword id="KW-0805">Transcription regulation</keyword>
<keyword id="KW-0808">Transferase</keyword>
<keyword id="KW-0833">Ubl conjugation pathway</keyword>
<gene>
    <name type="primary">UBC2</name>
    <name type="ordered locus">CAGL0I00352g</name>
</gene>
<reference key="1">
    <citation type="journal article" date="2004" name="Nature">
        <title>Genome evolution in yeasts.</title>
        <authorList>
            <person name="Dujon B."/>
            <person name="Sherman D."/>
            <person name="Fischer G."/>
            <person name="Durrens P."/>
            <person name="Casaregola S."/>
            <person name="Lafontaine I."/>
            <person name="de Montigny J."/>
            <person name="Marck C."/>
            <person name="Neuveglise C."/>
            <person name="Talla E."/>
            <person name="Goffard N."/>
            <person name="Frangeul L."/>
            <person name="Aigle M."/>
            <person name="Anthouard V."/>
            <person name="Babour A."/>
            <person name="Barbe V."/>
            <person name="Barnay S."/>
            <person name="Blanchin S."/>
            <person name="Beckerich J.-M."/>
            <person name="Beyne E."/>
            <person name="Bleykasten C."/>
            <person name="Boisrame A."/>
            <person name="Boyer J."/>
            <person name="Cattolico L."/>
            <person name="Confanioleri F."/>
            <person name="de Daruvar A."/>
            <person name="Despons L."/>
            <person name="Fabre E."/>
            <person name="Fairhead C."/>
            <person name="Ferry-Dumazet H."/>
            <person name="Groppi A."/>
            <person name="Hantraye F."/>
            <person name="Hennequin C."/>
            <person name="Jauniaux N."/>
            <person name="Joyet P."/>
            <person name="Kachouri R."/>
            <person name="Kerrest A."/>
            <person name="Koszul R."/>
            <person name="Lemaire M."/>
            <person name="Lesur I."/>
            <person name="Ma L."/>
            <person name="Muller H."/>
            <person name="Nicaud J.-M."/>
            <person name="Nikolski M."/>
            <person name="Oztas S."/>
            <person name="Ozier-Kalogeropoulos O."/>
            <person name="Pellenz S."/>
            <person name="Potier S."/>
            <person name="Richard G.-F."/>
            <person name="Straub M.-L."/>
            <person name="Suleau A."/>
            <person name="Swennen D."/>
            <person name="Tekaia F."/>
            <person name="Wesolowski-Louvel M."/>
            <person name="Westhof E."/>
            <person name="Wirth B."/>
            <person name="Zeniou-Meyer M."/>
            <person name="Zivanovic Y."/>
            <person name="Bolotin-Fukuhara M."/>
            <person name="Thierry A."/>
            <person name="Bouchier C."/>
            <person name="Caudron B."/>
            <person name="Scarpelli C."/>
            <person name="Gaillardin C."/>
            <person name="Weissenbach J."/>
            <person name="Wincker P."/>
            <person name="Souciet J.-L."/>
        </authorList>
    </citation>
    <scope>NUCLEOTIDE SEQUENCE [LARGE SCALE GENOMIC DNA]</scope>
    <source>
        <strain>ATCC 2001 / BCRC 20586 / JCM 3761 / NBRC 0622 / NRRL Y-65 / CBS 138</strain>
    </source>
</reference>
<name>UBC2_CANGA</name>
<proteinExistence type="inferred from homology"/>
<evidence type="ECO:0000250" key="1">
    <source>
        <dbReference type="UniProtKB" id="Q5VVX9"/>
    </source>
</evidence>
<evidence type="ECO:0000255" key="2">
    <source>
        <dbReference type="PROSITE-ProRule" id="PRU00388"/>
    </source>
</evidence>
<evidence type="ECO:0000255" key="3">
    <source>
        <dbReference type="PROSITE-ProRule" id="PRU10133"/>
    </source>
</evidence>
<evidence type="ECO:0000256" key="4">
    <source>
        <dbReference type="SAM" id="MobiDB-lite"/>
    </source>
</evidence>
<dbReference type="EC" id="2.3.2.23"/>
<dbReference type="EMBL" id="CR380955">
    <property type="protein sequence ID" value="CAG60205.1"/>
    <property type="molecule type" value="Genomic_DNA"/>
</dbReference>
<dbReference type="RefSeq" id="XP_447268.1">
    <property type="nucleotide sequence ID" value="XM_447268.1"/>
</dbReference>
<dbReference type="SMR" id="Q6FR76"/>
<dbReference type="FunCoup" id="Q6FR76">
    <property type="interactions" value="873"/>
</dbReference>
<dbReference type="STRING" id="284593.Q6FR76"/>
<dbReference type="EnsemblFungi" id="CAGL0I00352g-T">
    <property type="protein sequence ID" value="CAGL0I00352g-T-p1"/>
    <property type="gene ID" value="CAGL0I00352g"/>
</dbReference>
<dbReference type="KEGG" id="cgr:2889314"/>
<dbReference type="CGD" id="CAL0130017">
    <property type="gene designation" value="CAGL0I00352g"/>
</dbReference>
<dbReference type="VEuPathDB" id="FungiDB:B1J91_I00352g"/>
<dbReference type="VEuPathDB" id="FungiDB:CAGL0I00352g"/>
<dbReference type="eggNOG" id="KOG0419">
    <property type="taxonomic scope" value="Eukaryota"/>
</dbReference>
<dbReference type="HOGENOM" id="CLU_030988_10_2_1"/>
<dbReference type="InParanoid" id="Q6FR76"/>
<dbReference type="OMA" id="DHKSQYI"/>
<dbReference type="UniPathway" id="UPA00143"/>
<dbReference type="Proteomes" id="UP000002428">
    <property type="component" value="Chromosome I"/>
</dbReference>
<dbReference type="GO" id="GO:0000781">
    <property type="term" value="C:chromosome, telomeric region"/>
    <property type="evidence" value="ECO:0007669"/>
    <property type="project" value="GOC"/>
</dbReference>
<dbReference type="GO" id="GO:0005737">
    <property type="term" value="C:cytoplasm"/>
    <property type="evidence" value="ECO:0007669"/>
    <property type="project" value="UniProtKB-SubCell"/>
</dbReference>
<dbReference type="GO" id="GO:0033503">
    <property type="term" value="C:HULC complex"/>
    <property type="evidence" value="ECO:0007669"/>
    <property type="project" value="EnsemblFungi"/>
</dbReference>
<dbReference type="GO" id="GO:1990304">
    <property type="term" value="C:MUB1-RAD6-UBR2 ubiquitin ligase complex"/>
    <property type="evidence" value="ECO:0007669"/>
    <property type="project" value="EnsemblFungi"/>
</dbReference>
<dbReference type="GO" id="GO:0005634">
    <property type="term" value="C:nucleus"/>
    <property type="evidence" value="ECO:0007669"/>
    <property type="project" value="UniProtKB-SubCell"/>
</dbReference>
<dbReference type="GO" id="GO:0097505">
    <property type="term" value="C:Rad6-Rad18 complex"/>
    <property type="evidence" value="ECO:0007669"/>
    <property type="project" value="EnsemblFungi"/>
</dbReference>
<dbReference type="GO" id="GO:1990305">
    <property type="term" value="C:RAD6-UBR2 ubiquitin ligase complex"/>
    <property type="evidence" value="ECO:0007669"/>
    <property type="project" value="EnsemblFungi"/>
</dbReference>
<dbReference type="GO" id="GO:1990303">
    <property type="term" value="C:UBR1-RAD6 ubiquitin ligase complex"/>
    <property type="evidence" value="ECO:0007669"/>
    <property type="project" value="EnsemblFungi"/>
</dbReference>
<dbReference type="GO" id="GO:0005524">
    <property type="term" value="F:ATP binding"/>
    <property type="evidence" value="ECO:0007669"/>
    <property type="project" value="UniProtKB-KW"/>
</dbReference>
<dbReference type="GO" id="GO:0070628">
    <property type="term" value="F:proteasome binding"/>
    <property type="evidence" value="ECO:0007669"/>
    <property type="project" value="EnsemblFungi"/>
</dbReference>
<dbReference type="GO" id="GO:0003697">
    <property type="term" value="F:single-stranded DNA binding"/>
    <property type="evidence" value="ECO:0007669"/>
    <property type="project" value="EnsemblFungi"/>
</dbReference>
<dbReference type="GO" id="GO:0017116">
    <property type="term" value="F:single-stranded DNA helicase activity"/>
    <property type="evidence" value="ECO:0007669"/>
    <property type="project" value="EnsemblFungi"/>
</dbReference>
<dbReference type="GO" id="GO:0061631">
    <property type="term" value="F:ubiquitin conjugating enzyme activity"/>
    <property type="evidence" value="ECO:0007669"/>
    <property type="project" value="UniProtKB-EC"/>
</dbReference>
<dbReference type="GO" id="GO:0034620">
    <property type="term" value="P:cellular response to unfolded protein"/>
    <property type="evidence" value="ECO:0007669"/>
    <property type="project" value="EnsemblFungi"/>
</dbReference>
<dbReference type="GO" id="GO:0071629">
    <property type="term" value="P:cytoplasm protein quality control by the ubiquitin-proteasome system"/>
    <property type="evidence" value="ECO:0007669"/>
    <property type="project" value="EnsemblFungi"/>
</dbReference>
<dbReference type="GO" id="GO:0006353">
    <property type="term" value="P:DNA-templated transcription termination"/>
    <property type="evidence" value="ECO:0007669"/>
    <property type="project" value="EnsemblFungi"/>
</dbReference>
<dbReference type="GO" id="GO:0000724">
    <property type="term" value="P:double-strand break repair via homologous recombination"/>
    <property type="evidence" value="ECO:0007669"/>
    <property type="project" value="EnsemblFungi"/>
</dbReference>
<dbReference type="GO" id="GO:0036503">
    <property type="term" value="P:ERAD pathway"/>
    <property type="evidence" value="ECO:0007669"/>
    <property type="project" value="EnsemblFungi"/>
</dbReference>
<dbReference type="GO" id="GO:0042275">
    <property type="term" value="P:error-free postreplication DNA repair"/>
    <property type="evidence" value="ECO:0007669"/>
    <property type="project" value="EnsemblFungi"/>
</dbReference>
<dbReference type="GO" id="GO:0070987">
    <property type="term" value="P:error-free translesion synthesis"/>
    <property type="evidence" value="ECO:0007669"/>
    <property type="project" value="EnsemblFungi"/>
</dbReference>
<dbReference type="GO" id="GO:0042276">
    <property type="term" value="P:error-prone translesion synthesis"/>
    <property type="evidence" value="ECO:0007669"/>
    <property type="project" value="EnsemblFungi"/>
</dbReference>
<dbReference type="GO" id="GO:0042138">
    <property type="term" value="P:meiotic DNA double-strand break formation"/>
    <property type="evidence" value="ECO:0007669"/>
    <property type="project" value="EnsemblFungi"/>
</dbReference>
<dbReference type="GO" id="GO:0031571">
    <property type="term" value="P:mitotic G1 DNA damage checkpoint signaling"/>
    <property type="evidence" value="ECO:0007669"/>
    <property type="project" value="EnsemblFungi"/>
</dbReference>
<dbReference type="GO" id="GO:2000639">
    <property type="term" value="P:negative regulation of SREBP signaling pathway"/>
    <property type="evidence" value="ECO:0007669"/>
    <property type="project" value="EnsemblFungi"/>
</dbReference>
<dbReference type="GO" id="GO:0016567">
    <property type="term" value="P:protein ubiquitination"/>
    <property type="evidence" value="ECO:0007669"/>
    <property type="project" value="UniProtKB-UniPathway"/>
</dbReference>
<dbReference type="GO" id="GO:0090089">
    <property type="term" value="P:regulation of dipeptide transport"/>
    <property type="evidence" value="ECO:0007669"/>
    <property type="project" value="EnsemblFungi"/>
</dbReference>
<dbReference type="GO" id="GO:0009302">
    <property type="term" value="P:sno(s)RNA transcription"/>
    <property type="evidence" value="ECO:0007669"/>
    <property type="project" value="EnsemblFungi"/>
</dbReference>
<dbReference type="GO" id="GO:0030435">
    <property type="term" value="P:sporulation resulting in formation of a cellular spore"/>
    <property type="evidence" value="ECO:0007669"/>
    <property type="project" value="UniProtKB-KW"/>
</dbReference>
<dbReference type="GO" id="GO:0120174">
    <property type="term" value="P:stress-induced homeostatically regulated protein degradation pathway"/>
    <property type="evidence" value="ECO:0007669"/>
    <property type="project" value="EnsemblFungi"/>
</dbReference>
<dbReference type="GO" id="GO:0031509">
    <property type="term" value="P:subtelomeric heterochromatin formation"/>
    <property type="evidence" value="ECO:0007669"/>
    <property type="project" value="EnsemblFungi"/>
</dbReference>
<dbReference type="GO" id="GO:0000722">
    <property type="term" value="P:telomere maintenance via recombination"/>
    <property type="evidence" value="ECO:0007669"/>
    <property type="project" value="EnsemblFungi"/>
</dbReference>
<dbReference type="GO" id="GO:0006366">
    <property type="term" value="P:transcription by RNA polymerase II"/>
    <property type="evidence" value="ECO:0007669"/>
    <property type="project" value="EnsemblFungi"/>
</dbReference>
<dbReference type="GO" id="GO:0071596">
    <property type="term" value="P:ubiquitin-dependent protein catabolic process via the N-end rule pathway"/>
    <property type="evidence" value="ECO:0007669"/>
    <property type="project" value="EnsemblFungi"/>
</dbReference>
<dbReference type="CDD" id="cd23790">
    <property type="entry name" value="UBCc_UBE2A_2B"/>
    <property type="match status" value="1"/>
</dbReference>
<dbReference type="FunFam" id="3.10.110.10:FF:000007">
    <property type="entry name" value="Ubiquitin-conjugating enzyme E2 2"/>
    <property type="match status" value="1"/>
</dbReference>
<dbReference type="Gene3D" id="3.10.110.10">
    <property type="entry name" value="Ubiquitin Conjugating Enzyme"/>
    <property type="match status" value="1"/>
</dbReference>
<dbReference type="InterPro" id="IPR050113">
    <property type="entry name" value="Ub_conjugating_enzyme"/>
</dbReference>
<dbReference type="InterPro" id="IPR000608">
    <property type="entry name" value="UBQ-conjugat_E2_core"/>
</dbReference>
<dbReference type="InterPro" id="IPR023313">
    <property type="entry name" value="UBQ-conjugating_AS"/>
</dbReference>
<dbReference type="InterPro" id="IPR016135">
    <property type="entry name" value="UBQ-conjugating_enzyme/RWD"/>
</dbReference>
<dbReference type="PANTHER" id="PTHR24067">
    <property type="entry name" value="UBIQUITIN-CONJUGATING ENZYME E2"/>
    <property type="match status" value="1"/>
</dbReference>
<dbReference type="Pfam" id="PF00179">
    <property type="entry name" value="UQ_con"/>
    <property type="match status" value="1"/>
</dbReference>
<dbReference type="SMART" id="SM00212">
    <property type="entry name" value="UBCc"/>
    <property type="match status" value="1"/>
</dbReference>
<dbReference type="SUPFAM" id="SSF54495">
    <property type="entry name" value="UBC-like"/>
    <property type="match status" value="1"/>
</dbReference>
<dbReference type="PROSITE" id="PS00183">
    <property type="entry name" value="UBC_1"/>
    <property type="match status" value="1"/>
</dbReference>
<dbReference type="PROSITE" id="PS50127">
    <property type="entry name" value="UBC_2"/>
    <property type="match status" value="1"/>
</dbReference>
<accession>Q6FR76</accession>
<organism>
    <name type="scientific">Candida glabrata (strain ATCC 2001 / BCRC 20586 / JCM 3761 / NBRC 0622 / NRRL Y-65 / CBS 138)</name>
    <name type="common">Yeast</name>
    <name type="synonym">Nakaseomyces glabratus</name>
    <dbReference type="NCBI Taxonomy" id="284593"/>
    <lineage>
        <taxon>Eukaryota</taxon>
        <taxon>Fungi</taxon>
        <taxon>Dikarya</taxon>
        <taxon>Ascomycota</taxon>
        <taxon>Saccharomycotina</taxon>
        <taxon>Saccharomycetes</taxon>
        <taxon>Saccharomycetales</taxon>
        <taxon>Saccharomycetaceae</taxon>
        <taxon>Nakaseomyces</taxon>
    </lineage>
</organism>
<sequence length="167" mass="19189">MSTPARRRLMRDFKRMKEDSPPGVSASPLPDNVMVWNAMIIGPADTPYEDGTFRLLLEFDEDYPNKPPHVKFLSEMFHPNVYANGEICLDILQNRWTPTYDVASILTSIQSLFNDPNPASPANVEAATLFKDHKSQYIKRVKETVEKSWEDNMDDMDDSDEDDEDDE</sequence>
<feature type="chain" id="PRO_0000082529" description="Ubiquitin-conjugating enzyme E2 2">
    <location>
        <begin position="1"/>
        <end position="167"/>
    </location>
</feature>
<feature type="domain" description="UBC core" evidence="2">
    <location>
        <begin position="4"/>
        <end position="150"/>
    </location>
</feature>
<feature type="region of interest" description="Disordered" evidence="4">
    <location>
        <begin position="148"/>
        <end position="167"/>
    </location>
</feature>
<feature type="compositionally biased region" description="Acidic residues" evidence="4">
    <location>
        <begin position="151"/>
        <end position="167"/>
    </location>
</feature>
<feature type="active site" description="Glycyl thioester intermediate" evidence="2 3">
    <location>
        <position position="88"/>
    </location>
</feature>